<proteinExistence type="predicted"/>
<gene>
    <name type="primary">yetN</name>
    <name type="ordered locus">BSU07240</name>
</gene>
<organism>
    <name type="scientific">Bacillus subtilis (strain 168)</name>
    <dbReference type="NCBI Taxonomy" id="224308"/>
    <lineage>
        <taxon>Bacteria</taxon>
        <taxon>Bacillati</taxon>
        <taxon>Bacillota</taxon>
        <taxon>Bacilli</taxon>
        <taxon>Bacillales</taxon>
        <taxon>Bacillaceae</taxon>
        <taxon>Bacillus</taxon>
    </lineage>
</organism>
<name>YETN_BACSU</name>
<dbReference type="EMBL" id="D87979">
    <property type="protein sequence ID" value="BAA20122.1"/>
    <property type="molecule type" value="Genomic_DNA"/>
</dbReference>
<dbReference type="EMBL" id="AL009126">
    <property type="protein sequence ID" value="CAB12543.1"/>
    <property type="molecule type" value="Genomic_DNA"/>
</dbReference>
<dbReference type="PIR" id="C69799">
    <property type="entry name" value="C69799"/>
</dbReference>
<dbReference type="RefSeq" id="NP_388605.1">
    <property type="nucleotide sequence ID" value="NC_000964.3"/>
</dbReference>
<dbReference type="RefSeq" id="WP_003233793.1">
    <property type="nucleotide sequence ID" value="NZ_OZ025638.1"/>
</dbReference>
<dbReference type="FunCoup" id="O06490">
    <property type="interactions" value="174"/>
</dbReference>
<dbReference type="STRING" id="224308.BSU07240"/>
<dbReference type="PaxDb" id="224308-BSU07240"/>
<dbReference type="EnsemblBacteria" id="CAB12543">
    <property type="protein sequence ID" value="CAB12543"/>
    <property type="gene ID" value="BSU_07240"/>
</dbReference>
<dbReference type="GeneID" id="936089"/>
<dbReference type="KEGG" id="bsu:BSU07240"/>
<dbReference type="PATRIC" id="fig|224308.179.peg.785"/>
<dbReference type="eggNOG" id="ENOG502Z81V">
    <property type="taxonomic scope" value="Bacteria"/>
</dbReference>
<dbReference type="InParanoid" id="O06490"/>
<dbReference type="OrthoDB" id="2974172at2"/>
<dbReference type="BioCyc" id="BSUB:BSU07240-MONOMER"/>
<dbReference type="Proteomes" id="UP000001570">
    <property type="component" value="Chromosome"/>
</dbReference>
<dbReference type="InterPro" id="IPR025012">
    <property type="entry name" value="DUF3898"/>
</dbReference>
<dbReference type="InterPro" id="IPR025006">
    <property type="entry name" value="DUF3900"/>
</dbReference>
<dbReference type="Pfam" id="PF13037">
    <property type="entry name" value="DUF3898"/>
    <property type="match status" value="1"/>
</dbReference>
<dbReference type="Pfam" id="PF13039">
    <property type="entry name" value="DUF3900"/>
    <property type="match status" value="1"/>
</dbReference>
<protein>
    <recommendedName>
        <fullName>Uncharacterized protein YetN</fullName>
    </recommendedName>
</protein>
<sequence length="356" mass="41449">MDFEIRFLSFYVIQVEGKDEQANKQFKHFQTLDTGEFEESELKDFLDGELKKIVKRKADRHPQSEQVPTKIGHFIVEPGHELDSNPNYNMFNRARLAETKEDFNELSEQFVRTYLDTSAVRGGVFLVASAVPRKYFDESFVFIMKCDFEPKVARISDASSLIKKVEMAITTKNMKSIQYPYMPEEGMVEEGELKIHQASHARYFEDFLKFVEYGESMPEIMKNQVMNMVQEHVYETFEDNSEELKQFEHDIEIWEASEKREIQERLDTHQVIEASAQIIEHTPEAQLKMKVGETEIKGLLADFGDSIHLAKVNGRYVALIEAETISFEKGSSPVEFYKPEGLHEVIERIRNKTEQD</sequence>
<reference key="1">
    <citation type="journal article" date="1997" name="Microbiology">
        <title>A 23.4 kb segment at the 69 degrees-70 degrees region of the Bacillus subtilis genome.</title>
        <authorList>
            <person name="Yamamoto H."/>
            <person name="Uchiyama S."/>
            <person name="Nugroho F.A."/>
            <person name="Sekiguchi J."/>
        </authorList>
    </citation>
    <scope>NUCLEOTIDE SEQUENCE [GENOMIC DNA]</scope>
    <source>
        <strain>168 / AC327</strain>
    </source>
</reference>
<reference key="2">
    <citation type="journal article" date="1997" name="Nature">
        <title>The complete genome sequence of the Gram-positive bacterium Bacillus subtilis.</title>
        <authorList>
            <person name="Kunst F."/>
            <person name="Ogasawara N."/>
            <person name="Moszer I."/>
            <person name="Albertini A.M."/>
            <person name="Alloni G."/>
            <person name="Azevedo V."/>
            <person name="Bertero M.G."/>
            <person name="Bessieres P."/>
            <person name="Bolotin A."/>
            <person name="Borchert S."/>
            <person name="Borriss R."/>
            <person name="Boursier L."/>
            <person name="Brans A."/>
            <person name="Braun M."/>
            <person name="Brignell S.C."/>
            <person name="Bron S."/>
            <person name="Brouillet S."/>
            <person name="Bruschi C.V."/>
            <person name="Caldwell B."/>
            <person name="Capuano V."/>
            <person name="Carter N.M."/>
            <person name="Choi S.-K."/>
            <person name="Codani J.-J."/>
            <person name="Connerton I.F."/>
            <person name="Cummings N.J."/>
            <person name="Daniel R.A."/>
            <person name="Denizot F."/>
            <person name="Devine K.M."/>
            <person name="Duesterhoeft A."/>
            <person name="Ehrlich S.D."/>
            <person name="Emmerson P.T."/>
            <person name="Entian K.-D."/>
            <person name="Errington J."/>
            <person name="Fabret C."/>
            <person name="Ferrari E."/>
            <person name="Foulger D."/>
            <person name="Fritz C."/>
            <person name="Fujita M."/>
            <person name="Fujita Y."/>
            <person name="Fuma S."/>
            <person name="Galizzi A."/>
            <person name="Galleron N."/>
            <person name="Ghim S.-Y."/>
            <person name="Glaser P."/>
            <person name="Goffeau A."/>
            <person name="Golightly E.J."/>
            <person name="Grandi G."/>
            <person name="Guiseppi G."/>
            <person name="Guy B.J."/>
            <person name="Haga K."/>
            <person name="Haiech J."/>
            <person name="Harwood C.R."/>
            <person name="Henaut A."/>
            <person name="Hilbert H."/>
            <person name="Holsappel S."/>
            <person name="Hosono S."/>
            <person name="Hullo M.-F."/>
            <person name="Itaya M."/>
            <person name="Jones L.-M."/>
            <person name="Joris B."/>
            <person name="Karamata D."/>
            <person name="Kasahara Y."/>
            <person name="Klaerr-Blanchard M."/>
            <person name="Klein C."/>
            <person name="Kobayashi Y."/>
            <person name="Koetter P."/>
            <person name="Koningstein G."/>
            <person name="Krogh S."/>
            <person name="Kumano M."/>
            <person name="Kurita K."/>
            <person name="Lapidus A."/>
            <person name="Lardinois S."/>
            <person name="Lauber J."/>
            <person name="Lazarevic V."/>
            <person name="Lee S.-M."/>
            <person name="Levine A."/>
            <person name="Liu H."/>
            <person name="Masuda S."/>
            <person name="Mauel C."/>
            <person name="Medigue C."/>
            <person name="Medina N."/>
            <person name="Mellado R.P."/>
            <person name="Mizuno M."/>
            <person name="Moestl D."/>
            <person name="Nakai S."/>
            <person name="Noback M."/>
            <person name="Noone D."/>
            <person name="O'Reilly M."/>
            <person name="Ogawa K."/>
            <person name="Ogiwara A."/>
            <person name="Oudega B."/>
            <person name="Park S.-H."/>
            <person name="Parro V."/>
            <person name="Pohl T.M."/>
            <person name="Portetelle D."/>
            <person name="Porwollik S."/>
            <person name="Prescott A.M."/>
            <person name="Presecan E."/>
            <person name="Pujic P."/>
            <person name="Purnelle B."/>
            <person name="Rapoport G."/>
            <person name="Rey M."/>
            <person name="Reynolds S."/>
            <person name="Rieger M."/>
            <person name="Rivolta C."/>
            <person name="Rocha E."/>
            <person name="Roche B."/>
            <person name="Rose M."/>
            <person name="Sadaie Y."/>
            <person name="Sato T."/>
            <person name="Scanlan E."/>
            <person name="Schleich S."/>
            <person name="Schroeter R."/>
            <person name="Scoffone F."/>
            <person name="Sekiguchi J."/>
            <person name="Sekowska A."/>
            <person name="Seror S.J."/>
            <person name="Serror P."/>
            <person name="Shin B.-S."/>
            <person name="Soldo B."/>
            <person name="Sorokin A."/>
            <person name="Tacconi E."/>
            <person name="Takagi T."/>
            <person name="Takahashi H."/>
            <person name="Takemaru K."/>
            <person name="Takeuchi M."/>
            <person name="Tamakoshi A."/>
            <person name="Tanaka T."/>
            <person name="Terpstra P."/>
            <person name="Tognoni A."/>
            <person name="Tosato V."/>
            <person name="Uchiyama S."/>
            <person name="Vandenbol M."/>
            <person name="Vannier F."/>
            <person name="Vassarotti A."/>
            <person name="Viari A."/>
            <person name="Wambutt R."/>
            <person name="Wedler E."/>
            <person name="Wedler H."/>
            <person name="Weitzenegger T."/>
            <person name="Winters P."/>
            <person name="Wipat A."/>
            <person name="Yamamoto H."/>
            <person name="Yamane K."/>
            <person name="Yasumoto K."/>
            <person name="Yata K."/>
            <person name="Yoshida K."/>
            <person name="Yoshikawa H.-F."/>
            <person name="Zumstein E."/>
            <person name="Yoshikawa H."/>
            <person name="Danchin A."/>
        </authorList>
    </citation>
    <scope>NUCLEOTIDE SEQUENCE [LARGE SCALE GENOMIC DNA]</scope>
    <source>
        <strain>168</strain>
    </source>
</reference>
<feature type="chain" id="PRO_0000378464" description="Uncharacterized protein YetN">
    <location>
        <begin position="1"/>
        <end position="356"/>
    </location>
</feature>
<accession>O06490</accession>
<accession>Q797B4</accession>
<keyword id="KW-1185">Reference proteome</keyword>